<sequence>MGEFRRYFELDKFLQQDFLYPLIFHEYIYALAHDHVLNRFILVDNFGYDNKSSSLMVKRLITRMSQQNPLLISANDSNXKKWLGHNKNLYSQMISEGFTVIGEIPFSLRLVSSVERKEEIGKSHNLRSIHSLFPFLEDNFVHLNYVSDILIPYPIHLEIVVQTLRSWLKDASSLHLLRFLLYEYQNWNSLIIPTPKKPSSIVSKRNQRLFLFLYNSYVCEYESIFFFLCNQSSHLPSTSSETLFERTFFHGKIKALVEVGSNDFPPVRWLFKDPFMHYVRYQGKSILASKSTPLLMDKWKYYLVNFWQCHLYVWSKPVRIHMNQLSNHSFGFLGYLSSVRLNPSVVRSQMLE</sequence>
<reference key="1">
    <citation type="journal article" date="1994" name="Syst. Bot.">
        <title>matK DNA sequences and phylogenetic reconstruction in Saxifragaceae sensu stricto.</title>
        <authorList>
            <person name="Johnson L.A."/>
            <person name="Soltis D.E."/>
        </authorList>
        <dbReference type="AGRICOLA" id="IND20396215"/>
    </citation>
    <scope>NUCLEOTIDE SEQUENCE [GENOMIC DNA]</scope>
    <source>
        <tissue>Leaf</tissue>
    </source>
</reference>
<comment type="function">
    <text evidence="1">Usually encoded in the trnK tRNA gene intron. Probably assists in splicing its own and other chloroplast group II introns (By similarity).</text>
</comment>
<comment type="subcellular location">
    <subcellularLocation>
        <location>Plastid</location>
        <location>Chloroplast</location>
    </subcellularLocation>
</comment>
<comment type="similarity">
    <text evidence="2">Belongs to the intron maturase 2 family. MatK subfamily.</text>
</comment>
<evidence type="ECO:0000250" key="1"/>
<evidence type="ECO:0000305" key="2"/>
<organism>
    <name type="scientific">Saxifraga cernua</name>
    <name type="common">Nodding saxifrage</name>
    <name type="synonym">Lobaria cernua</name>
    <dbReference type="NCBI Taxonomy" id="29769"/>
    <lineage>
        <taxon>Eukaryota</taxon>
        <taxon>Viridiplantae</taxon>
        <taxon>Streptophyta</taxon>
        <taxon>Embryophyta</taxon>
        <taxon>Tracheophyta</taxon>
        <taxon>Spermatophyta</taxon>
        <taxon>Magnoliopsida</taxon>
        <taxon>eudicotyledons</taxon>
        <taxon>Gunneridae</taxon>
        <taxon>Pentapetalae</taxon>
        <taxon>Saxifragales</taxon>
        <taxon>Saxifragaceae</taxon>
        <taxon>Saxifrageae</taxon>
        <taxon>Saxifraga</taxon>
    </lineage>
</organism>
<keyword id="KW-0150">Chloroplast</keyword>
<keyword id="KW-0507">mRNA processing</keyword>
<keyword id="KW-0934">Plastid</keyword>
<keyword id="KW-0694">RNA-binding</keyword>
<keyword id="KW-0819">tRNA processing</keyword>
<name>MATK_SAXCE</name>
<accession>Q33078</accession>
<protein>
    <recommendedName>
        <fullName>Maturase K</fullName>
    </recommendedName>
    <alternativeName>
        <fullName>Intron maturase</fullName>
    </alternativeName>
</protein>
<gene>
    <name type="primary">matK</name>
    <name type="synonym">ycf14</name>
</gene>
<dbReference type="EMBL" id="L34140">
    <property type="protein sequence ID" value="AAA84601.1"/>
    <property type="molecule type" value="Genomic_DNA"/>
</dbReference>
<dbReference type="GO" id="GO:0009507">
    <property type="term" value="C:chloroplast"/>
    <property type="evidence" value="ECO:0007669"/>
    <property type="project" value="UniProtKB-SubCell"/>
</dbReference>
<dbReference type="GO" id="GO:0003723">
    <property type="term" value="F:RNA binding"/>
    <property type="evidence" value="ECO:0007669"/>
    <property type="project" value="UniProtKB-KW"/>
</dbReference>
<dbReference type="GO" id="GO:0006397">
    <property type="term" value="P:mRNA processing"/>
    <property type="evidence" value="ECO:0007669"/>
    <property type="project" value="UniProtKB-KW"/>
</dbReference>
<dbReference type="GO" id="GO:0008033">
    <property type="term" value="P:tRNA processing"/>
    <property type="evidence" value="ECO:0007669"/>
    <property type="project" value="UniProtKB-KW"/>
</dbReference>
<dbReference type="InterPro" id="IPR002866">
    <property type="entry name" value="Maturase_MatK"/>
</dbReference>
<dbReference type="InterPro" id="IPR024942">
    <property type="entry name" value="Maturase_MatK_N"/>
</dbReference>
<dbReference type="PANTHER" id="PTHR34811">
    <property type="entry name" value="MATURASE K"/>
    <property type="match status" value="1"/>
</dbReference>
<dbReference type="PANTHER" id="PTHR34811:SF1">
    <property type="entry name" value="MATURASE K"/>
    <property type="match status" value="1"/>
</dbReference>
<dbReference type="Pfam" id="PF01824">
    <property type="entry name" value="MatK_N"/>
    <property type="match status" value="1"/>
</dbReference>
<feature type="chain" id="PRO_0000143698" description="Maturase K">
    <location>
        <begin position="1"/>
        <end position="352" status="greater than"/>
    </location>
</feature>
<feature type="non-terminal residue">
    <location>
        <position position="352"/>
    </location>
</feature>
<geneLocation type="chloroplast"/>
<proteinExistence type="inferred from homology"/>